<name>RS24_XENLA</name>
<evidence type="ECO:0000250" key="1">
    <source>
        <dbReference type="UniProtKB" id="P62847"/>
    </source>
</evidence>
<evidence type="ECO:0000256" key="2">
    <source>
        <dbReference type="SAM" id="MobiDB-lite"/>
    </source>
</evidence>
<evidence type="ECO:0000305" key="3"/>
<accession>P02377</accession>
<organism>
    <name type="scientific">Xenopus laevis</name>
    <name type="common">African clawed frog</name>
    <dbReference type="NCBI Taxonomy" id="8355"/>
    <lineage>
        <taxon>Eukaryota</taxon>
        <taxon>Metazoa</taxon>
        <taxon>Chordata</taxon>
        <taxon>Craniata</taxon>
        <taxon>Vertebrata</taxon>
        <taxon>Euteleostomi</taxon>
        <taxon>Amphibia</taxon>
        <taxon>Batrachia</taxon>
        <taxon>Anura</taxon>
        <taxon>Pipoidea</taxon>
        <taxon>Pipidae</taxon>
        <taxon>Xenopodinae</taxon>
        <taxon>Xenopus</taxon>
        <taxon>Xenopus</taxon>
    </lineage>
</organism>
<comment type="function">
    <text evidence="1">Component of the small ribosomal subunit. The ribosome is a large ribonucleoprotein complex responsible for the synthesis of proteins in the cell. Required for processing of pre-rRNA and maturation of 40S ribosomal subunits. Part of the small subunit (SSU) processome, first precursor of the small eukaryotic ribosomal subunit. During the assembly of the SSU processome in the nucleolus, many ribosome biogenesis factors, an RNA chaperone and ribosomal proteins associate with the nascent pre-rRNA and work in concert to generate RNA folding, modifications, rearrangements and cleavage as well as targeted degradation of pre-ribosomal RNA by the RNA exosome.</text>
</comment>
<comment type="subunit">
    <text evidence="1">Component of the small ribosomal subunit. Part of the small subunit (SSU) processome, composed of more than 70 proteins and the RNA chaperone small nucleolar RNA (snoRNA) U3.</text>
</comment>
<comment type="subcellular location">
    <subcellularLocation>
        <location evidence="1">Cytoplasm</location>
    </subcellularLocation>
    <subcellularLocation>
        <location evidence="1">Nucleus</location>
        <location evidence="1">Nucleolus</location>
    </subcellularLocation>
</comment>
<comment type="similarity">
    <text evidence="3">Belongs to the eukaryotic ribosomal protein eS24 family.</text>
</comment>
<dbReference type="EMBL" id="V01443">
    <property type="protein sequence ID" value="CAA24704.1"/>
    <property type="molecule type" value="mRNA"/>
</dbReference>
<dbReference type="PIR" id="A02747">
    <property type="entry name" value="R3XL19"/>
</dbReference>
<dbReference type="RefSeq" id="NP_001165162.1">
    <property type="nucleotide sequence ID" value="NM_001171691.1"/>
</dbReference>
<dbReference type="PDB" id="7OYC">
    <property type="method" value="EM"/>
    <property type="resolution" value="2.40 A"/>
    <property type="chains" value="Y2=1-132"/>
</dbReference>
<dbReference type="PDBsum" id="7OYC"/>
<dbReference type="EMDB" id="EMD-13113"/>
<dbReference type="SMR" id="P02377"/>
<dbReference type="BioGRID" id="97662">
    <property type="interactions" value="1"/>
</dbReference>
<dbReference type="DNASU" id="379419"/>
<dbReference type="GeneID" id="379419"/>
<dbReference type="KEGG" id="xla:379419"/>
<dbReference type="AGR" id="Xenbase:XB-GENE-967651"/>
<dbReference type="CTD" id="379419"/>
<dbReference type="Xenbase" id="XB-GENE-967651">
    <property type="gene designation" value="rps24.L"/>
</dbReference>
<dbReference type="OrthoDB" id="5571754at2759"/>
<dbReference type="Proteomes" id="UP000186698">
    <property type="component" value="Chromosome 7L"/>
</dbReference>
<dbReference type="Bgee" id="379419">
    <property type="expression patterns" value="Expressed in lung and 18 other cell types or tissues"/>
</dbReference>
<dbReference type="GO" id="GO:0005737">
    <property type="term" value="C:cytoplasm"/>
    <property type="evidence" value="ECO:0007669"/>
    <property type="project" value="UniProtKB-SubCell"/>
</dbReference>
<dbReference type="GO" id="GO:0005730">
    <property type="term" value="C:nucleolus"/>
    <property type="evidence" value="ECO:0007669"/>
    <property type="project" value="UniProtKB-SubCell"/>
</dbReference>
<dbReference type="GO" id="GO:0044391">
    <property type="term" value="C:ribosomal subunit"/>
    <property type="evidence" value="ECO:0007669"/>
    <property type="project" value="UniProtKB-ARBA"/>
</dbReference>
<dbReference type="GO" id="GO:0032040">
    <property type="term" value="C:small-subunit processome"/>
    <property type="evidence" value="ECO:0000250"/>
    <property type="project" value="UniProtKB"/>
</dbReference>
<dbReference type="GO" id="GO:0003735">
    <property type="term" value="F:structural constituent of ribosome"/>
    <property type="evidence" value="ECO:0007669"/>
    <property type="project" value="InterPro"/>
</dbReference>
<dbReference type="GO" id="GO:0042274">
    <property type="term" value="P:ribosomal small subunit biogenesis"/>
    <property type="evidence" value="ECO:0000250"/>
    <property type="project" value="UniProtKB"/>
</dbReference>
<dbReference type="GO" id="GO:0006412">
    <property type="term" value="P:translation"/>
    <property type="evidence" value="ECO:0007669"/>
    <property type="project" value="InterPro"/>
</dbReference>
<dbReference type="FunFam" id="3.30.70.3370:FF:000001">
    <property type="entry name" value="40S ribosomal protein S24"/>
    <property type="match status" value="1"/>
</dbReference>
<dbReference type="Gene3D" id="3.30.70.3370">
    <property type="match status" value="1"/>
</dbReference>
<dbReference type="HAMAP" id="MF_00545">
    <property type="entry name" value="Ribosomal_eS24"/>
    <property type="match status" value="1"/>
</dbReference>
<dbReference type="InterPro" id="IPR053709">
    <property type="entry name" value="eRP_eS24_sf"/>
</dbReference>
<dbReference type="InterPro" id="IPR001976">
    <property type="entry name" value="Ribosomal_eS24"/>
</dbReference>
<dbReference type="InterPro" id="IPR018098">
    <property type="entry name" value="Ribosomal_eS24_CS"/>
</dbReference>
<dbReference type="InterPro" id="IPR012678">
    <property type="entry name" value="Ribosomal_uL23/eL15/eS24_sf"/>
</dbReference>
<dbReference type="PANTHER" id="PTHR10496">
    <property type="entry name" value="40S RIBOSOMAL PROTEIN S24"/>
    <property type="match status" value="1"/>
</dbReference>
<dbReference type="Pfam" id="PF01282">
    <property type="entry name" value="Ribosomal_S24e"/>
    <property type="match status" value="1"/>
</dbReference>
<dbReference type="SUPFAM" id="SSF54189">
    <property type="entry name" value="Ribosomal proteins S24e, L23 and L15e"/>
    <property type="match status" value="1"/>
</dbReference>
<dbReference type="PROSITE" id="PS00529">
    <property type="entry name" value="RIBOSOMAL_S24E"/>
    <property type="match status" value="1"/>
</dbReference>
<sequence length="132" mass="15284">MNDTVTIRTRKFMTNRLLQRKQMVIDVLHPGKATVPKTEIREKLAKMYKTTPDVIFVFGFRTHFGGGKTTGFGMIYDSLDYAKKNEPKHRLAKHGLYEKKKTSRKQRKERKNRMKKVRGTAKANVGAGKKKD</sequence>
<protein>
    <recommendedName>
        <fullName evidence="3">Small ribosomal subunit protein eS24</fullName>
    </recommendedName>
    <alternativeName>
        <fullName>40S ribosomal protein S24</fullName>
    </alternativeName>
    <alternativeName>
        <fullName>S19</fullName>
    </alternativeName>
</protein>
<reference key="1">
    <citation type="journal article" date="1982" name="Gene">
        <title>Nucleotide sequences of cloned cDNA fragments specific for six Xenopus laevis ribosomal proteins.</title>
        <authorList>
            <person name="Amaldi F."/>
            <person name="Beccari E."/>
            <person name="Bozzoni I."/>
            <person name="Luo Z.-X."/>
            <person name="Pierandrei-Amaldi P."/>
        </authorList>
    </citation>
    <scope>NUCLEOTIDE SEQUENCE [MRNA]</scope>
</reference>
<gene>
    <name type="primary">rps24</name>
</gene>
<feature type="chain" id="PRO_0000137630" description="Small ribosomal subunit protein eS24">
    <location>
        <begin position="1"/>
        <end position="132"/>
    </location>
</feature>
<feature type="region of interest" description="Disordered" evidence="2">
    <location>
        <begin position="90"/>
        <end position="132"/>
    </location>
</feature>
<feature type="compositionally biased region" description="Basic and acidic residues" evidence="2">
    <location>
        <begin position="90"/>
        <end position="100"/>
    </location>
</feature>
<feature type="compositionally biased region" description="Basic residues" evidence="2">
    <location>
        <begin position="101"/>
        <end position="119"/>
    </location>
</feature>
<keyword id="KW-0002">3D-structure</keyword>
<keyword id="KW-0963">Cytoplasm</keyword>
<keyword id="KW-0539">Nucleus</keyword>
<keyword id="KW-1185">Reference proteome</keyword>
<keyword id="KW-0687">Ribonucleoprotein</keyword>
<keyword id="KW-0689">Ribosomal protein</keyword>
<proteinExistence type="evidence at protein level"/>